<dbReference type="EC" id="6.3.2.1" evidence="1"/>
<dbReference type="EMBL" id="AE008922">
    <property type="protein sequence ID" value="AAM41059.1"/>
    <property type="molecule type" value="Genomic_DNA"/>
</dbReference>
<dbReference type="RefSeq" id="NP_637135.1">
    <property type="nucleotide sequence ID" value="NC_003902.1"/>
</dbReference>
<dbReference type="RefSeq" id="WP_011036942.1">
    <property type="nucleotide sequence ID" value="NC_003902.1"/>
</dbReference>
<dbReference type="SMR" id="Q8P9S9"/>
<dbReference type="STRING" id="190485.XCC1769"/>
<dbReference type="EnsemblBacteria" id="AAM41059">
    <property type="protein sequence ID" value="AAM41059"/>
    <property type="gene ID" value="XCC1769"/>
</dbReference>
<dbReference type="KEGG" id="xcc:XCC1769"/>
<dbReference type="PATRIC" id="fig|190485.4.peg.1885"/>
<dbReference type="eggNOG" id="COG0414">
    <property type="taxonomic scope" value="Bacteria"/>
</dbReference>
<dbReference type="HOGENOM" id="CLU_047148_0_0_6"/>
<dbReference type="OrthoDB" id="9773087at2"/>
<dbReference type="UniPathway" id="UPA00028">
    <property type="reaction ID" value="UER00005"/>
</dbReference>
<dbReference type="Proteomes" id="UP000001010">
    <property type="component" value="Chromosome"/>
</dbReference>
<dbReference type="GO" id="GO:0005829">
    <property type="term" value="C:cytosol"/>
    <property type="evidence" value="ECO:0000318"/>
    <property type="project" value="GO_Central"/>
</dbReference>
<dbReference type="GO" id="GO:0005524">
    <property type="term" value="F:ATP binding"/>
    <property type="evidence" value="ECO:0007669"/>
    <property type="project" value="UniProtKB-KW"/>
</dbReference>
<dbReference type="GO" id="GO:0004592">
    <property type="term" value="F:pantoate-beta-alanine ligase activity"/>
    <property type="evidence" value="ECO:0000318"/>
    <property type="project" value="GO_Central"/>
</dbReference>
<dbReference type="GO" id="GO:0015940">
    <property type="term" value="P:pantothenate biosynthetic process"/>
    <property type="evidence" value="ECO:0000318"/>
    <property type="project" value="GO_Central"/>
</dbReference>
<dbReference type="CDD" id="cd00560">
    <property type="entry name" value="PanC"/>
    <property type="match status" value="1"/>
</dbReference>
<dbReference type="FunFam" id="3.40.50.620:FF:000114">
    <property type="entry name" value="Pantothenate synthetase"/>
    <property type="match status" value="1"/>
</dbReference>
<dbReference type="Gene3D" id="3.40.50.620">
    <property type="entry name" value="HUPs"/>
    <property type="match status" value="1"/>
</dbReference>
<dbReference type="Gene3D" id="3.30.1300.10">
    <property type="entry name" value="Pantoate-beta-alanine ligase, C-terminal domain"/>
    <property type="match status" value="1"/>
</dbReference>
<dbReference type="HAMAP" id="MF_00158">
    <property type="entry name" value="PanC"/>
    <property type="match status" value="1"/>
</dbReference>
<dbReference type="InterPro" id="IPR003721">
    <property type="entry name" value="Pantoate_ligase"/>
</dbReference>
<dbReference type="InterPro" id="IPR042176">
    <property type="entry name" value="Pantoate_ligase_C"/>
</dbReference>
<dbReference type="InterPro" id="IPR014729">
    <property type="entry name" value="Rossmann-like_a/b/a_fold"/>
</dbReference>
<dbReference type="NCBIfam" id="TIGR00018">
    <property type="entry name" value="panC"/>
    <property type="match status" value="1"/>
</dbReference>
<dbReference type="PANTHER" id="PTHR21299">
    <property type="entry name" value="CYTIDYLATE KINASE/PANTOATE-BETA-ALANINE LIGASE"/>
    <property type="match status" value="1"/>
</dbReference>
<dbReference type="PANTHER" id="PTHR21299:SF1">
    <property type="entry name" value="PANTOATE--BETA-ALANINE LIGASE"/>
    <property type="match status" value="1"/>
</dbReference>
<dbReference type="Pfam" id="PF02569">
    <property type="entry name" value="Pantoate_ligase"/>
    <property type="match status" value="1"/>
</dbReference>
<dbReference type="SUPFAM" id="SSF52374">
    <property type="entry name" value="Nucleotidylyl transferase"/>
    <property type="match status" value="1"/>
</dbReference>
<evidence type="ECO:0000255" key="1">
    <source>
        <dbReference type="HAMAP-Rule" id="MF_00158"/>
    </source>
</evidence>
<accession>Q8P9S9</accession>
<gene>
    <name evidence="1" type="primary">panC</name>
    <name type="ordered locus">XCC1769</name>
</gene>
<sequence>MIQTITDLSALRALVTGWKREGLRVALVPTMGNLHAGHYSLVMLARQYADRVVSSVFVNPTQFGPNEDFARYPRTPEADMRGLEDAGCDALWLPDVDTMYPLGTALATPIHAPGVSDVLEGVCRPGHFDGVCTVVARLFNQVQPDVAAFGKKDYQQLAVIRQMVADLAFPIEILGGSIVREADGLAMSSRNQYLSADDRPISAQIRKVLLQMRDSHAAGVPRLQVEAAATQALEAVGFRVDYTALRLPDLSEPDDGASNPAAGPRVALIAARIGSTRLIDNLEF</sequence>
<keyword id="KW-0067">ATP-binding</keyword>
<keyword id="KW-0963">Cytoplasm</keyword>
<keyword id="KW-0436">Ligase</keyword>
<keyword id="KW-0547">Nucleotide-binding</keyword>
<keyword id="KW-0566">Pantothenate biosynthesis</keyword>
<keyword id="KW-1185">Reference proteome</keyword>
<name>PANC_XANCP</name>
<comment type="function">
    <text evidence="1">Catalyzes the condensation of pantoate with beta-alanine in an ATP-dependent reaction via a pantoyl-adenylate intermediate.</text>
</comment>
<comment type="catalytic activity">
    <reaction evidence="1">
        <text>(R)-pantoate + beta-alanine + ATP = (R)-pantothenate + AMP + diphosphate + H(+)</text>
        <dbReference type="Rhea" id="RHEA:10912"/>
        <dbReference type="ChEBI" id="CHEBI:15378"/>
        <dbReference type="ChEBI" id="CHEBI:15980"/>
        <dbReference type="ChEBI" id="CHEBI:29032"/>
        <dbReference type="ChEBI" id="CHEBI:30616"/>
        <dbReference type="ChEBI" id="CHEBI:33019"/>
        <dbReference type="ChEBI" id="CHEBI:57966"/>
        <dbReference type="ChEBI" id="CHEBI:456215"/>
        <dbReference type="EC" id="6.3.2.1"/>
    </reaction>
</comment>
<comment type="pathway">
    <text evidence="1">Cofactor biosynthesis; (R)-pantothenate biosynthesis; (R)-pantothenate from (R)-pantoate and beta-alanine: step 1/1.</text>
</comment>
<comment type="subunit">
    <text evidence="1">Homodimer.</text>
</comment>
<comment type="subcellular location">
    <subcellularLocation>
        <location evidence="1">Cytoplasm</location>
    </subcellularLocation>
</comment>
<comment type="miscellaneous">
    <text evidence="1">The reaction proceeds by a bi uni uni bi ping pong mechanism.</text>
</comment>
<comment type="similarity">
    <text evidence="1">Belongs to the pantothenate synthetase family.</text>
</comment>
<protein>
    <recommendedName>
        <fullName evidence="1">Pantothenate synthetase</fullName>
        <shortName evidence="1">PS</shortName>
        <ecNumber evidence="1">6.3.2.1</ecNumber>
    </recommendedName>
    <alternativeName>
        <fullName evidence="1">Pantoate--beta-alanine ligase</fullName>
    </alternativeName>
    <alternativeName>
        <fullName evidence="1">Pantoate-activating enzyme</fullName>
    </alternativeName>
</protein>
<feature type="chain" id="PRO_0000128290" description="Pantothenate synthetase">
    <location>
        <begin position="1"/>
        <end position="284"/>
    </location>
</feature>
<feature type="active site" description="Proton donor" evidence="1">
    <location>
        <position position="38"/>
    </location>
</feature>
<feature type="binding site" evidence="1">
    <location>
        <begin position="31"/>
        <end position="38"/>
    </location>
    <ligand>
        <name>ATP</name>
        <dbReference type="ChEBI" id="CHEBI:30616"/>
    </ligand>
</feature>
<feature type="binding site" evidence="1">
    <location>
        <position position="62"/>
    </location>
    <ligand>
        <name>(R)-pantoate</name>
        <dbReference type="ChEBI" id="CHEBI:15980"/>
    </ligand>
</feature>
<feature type="binding site" evidence="1">
    <location>
        <position position="62"/>
    </location>
    <ligand>
        <name>beta-alanine</name>
        <dbReference type="ChEBI" id="CHEBI:57966"/>
    </ligand>
</feature>
<feature type="binding site" evidence="1">
    <location>
        <begin position="150"/>
        <end position="153"/>
    </location>
    <ligand>
        <name>ATP</name>
        <dbReference type="ChEBI" id="CHEBI:30616"/>
    </ligand>
</feature>
<feature type="binding site" evidence="1">
    <location>
        <position position="156"/>
    </location>
    <ligand>
        <name>(R)-pantoate</name>
        <dbReference type="ChEBI" id="CHEBI:15980"/>
    </ligand>
</feature>
<feature type="binding site" evidence="1">
    <location>
        <position position="179"/>
    </location>
    <ligand>
        <name>ATP</name>
        <dbReference type="ChEBI" id="CHEBI:30616"/>
    </ligand>
</feature>
<feature type="binding site" evidence="1">
    <location>
        <begin position="187"/>
        <end position="190"/>
    </location>
    <ligand>
        <name>ATP</name>
        <dbReference type="ChEBI" id="CHEBI:30616"/>
    </ligand>
</feature>
<reference key="1">
    <citation type="journal article" date="2002" name="Nature">
        <title>Comparison of the genomes of two Xanthomonas pathogens with differing host specificities.</title>
        <authorList>
            <person name="da Silva A.C.R."/>
            <person name="Ferro J.A."/>
            <person name="Reinach F.C."/>
            <person name="Farah C.S."/>
            <person name="Furlan L.R."/>
            <person name="Quaggio R.B."/>
            <person name="Monteiro-Vitorello C.B."/>
            <person name="Van Sluys M.A."/>
            <person name="Almeida N.F. Jr."/>
            <person name="Alves L.M.C."/>
            <person name="do Amaral A.M."/>
            <person name="Bertolini M.C."/>
            <person name="Camargo L.E.A."/>
            <person name="Camarotte G."/>
            <person name="Cannavan F."/>
            <person name="Cardozo J."/>
            <person name="Chambergo F."/>
            <person name="Ciapina L.P."/>
            <person name="Cicarelli R.M.B."/>
            <person name="Coutinho L.L."/>
            <person name="Cursino-Santos J.R."/>
            <person name="El-Dorry H."/>
            <person name="Faria J.B."/>
            <person name="Ferreira A.J.S."/>
            <person name="Ferreira R.C.C."/>
            <person name="Ferro M.I.T."/>
            <person name="Formighieri E.F."/>
            <person name="Franco M.C."/>
            <person name="Greggio C.C."/>
            <person name="Gruber A."/>
            <person name="Katsuyama A.M."/>
            <person name="Kishi L.T."/>
            <person name="Leite R.P."/>
            <person name="Lemos E.G.M."/>
            <person name="Lemos M.V.F."/>
            <person name="Locali E.C."/>
            <person name="Machado M.A."/>
            <person name="Madeira A.M.B.N."/>
            <person name="Martinez-Rossi N.M."/>
            <person name="Martins E.C."/>
            <person name="Meidanis J."/>
            <person name="Menck C.F.M."/>
            <person name="Miyaki C.Y."/>
            <person name="Moon D.H."/>
            <person name="Moreira L.M."/>
            <person name="Novo M.T.M."/>
            <person name="Okura V.K."/>
            <person name="Oliveira M.C."/>
            <person name="Oliveira V.R."/>
            <person name="Pereira H.A."/>
            <person name="Rossi A."/>
            <person name="Sena J.A.D."/>
            <person name="Silva C."/>
            <person name="de Souza R.F."/>
            <person name="Spinola L.A.F."/>
            <person name="Takita M.A."/>
            <person name="Tamura R.E."/>
            <person name="Teixeira E.C."/>
            <person name="Tezza R.I.D."/>
            <person name="Trindade dos Santos M."/>
            <person name="Truffi D."/>
            <person name="Tsai S.M."/>
            <person name="White F.F."/>
            <person name="Setubal J.C."/>
            <person name="Kitajima J.P."/>
        </authorList>
    </citation>
    <scope>NUCLEOTIDE SEQUENCE [LARGE SCALE GENOMIC DNA]</scope>
    <source>
        <strain>ATCC 33913 / DSM 3586 / NCPPB 528 / LMG 568 / P 25</strain>
    </source>
</reference>
<organism>
    <name type="scientific">Xanthomonas campestris pv. campestris (strain ATCC 33913 / DSM 3586 / NCPPB 528 / LMG 568 / P 25)</name>
    <dbReference type="NCBI Taxonomy" id="190485"/>
    <lineage>
        <taxon>Bacteria</taxon>
        <taxon>Pseudomonadati</taxon>
        <taxon>Pseudomonadota</taxon>
        <taxon>Gammaproteobacteria</taxon>
        <taxon>Lysobacterales</taxon>
        <taxon>Lysobacteraceae</taxon>
        <taxon>Xanthomonas</taxon>
    </lineage>
</organism>
<proteinExistence type="inferred from homology"/>